<reference key="1">
    <citation type="submission" date="2007-10" db="EMBL/GenBank/DDBJ databases">
        <title>Complete sequence of chromosome of Desulforudis audaxviator MP104C.</title>
        <authorList>
            <person name="Copeland A."/>
            <person name="Lucas S."/>
            <person name="Lapidus A."/>
            <person name="Barry K."/>
            <person name="Glavina del Rio T."/>
            <person name="Dalin E."/>
            <person name="Tice H."/>
            <person name="Bruce D."/>
            <person name="Pitluck S."/>
            <person name="Lowry S.R."/>
            <person name="Larimer F."/>
            <person name="Land M.L."/>
            <person name="Hauser L."/>
            <person name="Kyrpides N."/>
            <person name="Ivanova N.N."/>
            <person name="Richardson P."/>
        </authorList>
    </citation>
    <scope>NUCLEOTIDE SEQUENCE [LARGE SCALE GENOMIC DNA]</scope>
    <source>
        <strain>MP104C</strain>
    </source>
</reference>
<name>COBQ_DESAP</name>
<keyword id="KW-0169">Cobalamin biosynthesis</keyword>
<keyword id="KW-0315">Glutamine amidotransferase</keyword>
<keyword id="KW-1185">Reference proteome</keyword>
<protein>
    <recommendedName>
        <fullName evidence="1">Cobyric acid synthase</fullName>
    </recommendedName>
</protein>
<feature type="chain" id="PRO_1000116904" description="Cobyric acid synthase">
    <location>
        <begin position="1"/>
        <end position="496"/>
    </location>
</feature>
<feature type="domain" description="GATase cobBQ-type" evidence="1">
    <location>
        <begin position="252"/>
        <end position="442"/>
    </location>
</feature>
<feature type="active site" description="Nucleophile" evidence="1">
    <location>
        <position position="333"/>
    </location>
</feature>
<feature type="active site" evidence="1">
    <location>
        <position position="434"/>
    </location>
</feature>
<dbReference type="EMBL" id="CP000860">
    <property type="protein sequence ID" value="ACA60341.1"/>
    <property type="molecule type" value="Genomic_DNA"/>
</dbReference>
<dbReference type="RefSeq" id="WP_012302917.1">
    <property type="nucleotide sequence ID" value="NC_010424.1"/>
</dbReference>
<dbReference type="SMR" id="B1I5R2"/>
<dbReference type="STRING" id="477974.Daud_1848"/>
<dbReference type="KEGG" id="dau:Daud_1848"/>
<dbReference type="eggNOG" id="COG1492">
    <property type="taxonomic scope" value="Bacteria"/>
</dbReference>
<dbReference type="HOGENOM" id="CLU_019250_2_2_9"/>
<dbReference type="OrthoDB" id="9808302at2"/>
<dbReference type="UniPathway" id="UPA00148"/>
<dbReference type="Proteomes" id="UP000008544">
    <property type="component" value="Chromosome"/>
</dbReference>
<dbReference type="GO" id="GO:0015420">
    <property type="term" value="F:ABC-type vitamin B12 transporter activity"/>
    <property type="evidence" value="ECO:0007669"/>
    <property type="project" value="UniProtKB-UniRule"/>
</dbReference>
<dbReference type="GO" id="GO:0003824">
    <property type="term" value="F:catalytic activity"/>
    <property type="evidence" value="ECO:0007669"/>
    <property type="project" value="InterPro"/>
</dbReference>
<dbReference type="GO" id="GO:0009236">
    <property type="term" value="P:cobalamin biosynthetic process"/>
    <property type="evidence" value="ECO:0007669"/>
    <property type="project" value="UniProtKB-UniRule"/>
</dbReference>
<dbReference type="CDD" id="cd05389">
    <property type="entry name" value="CobQ_N"/>
    <property type="match status" value="1"/>
</dbReference>
<dbReference type="CDD" id="cd01750">
    <property type="entry name" value="GATase1_CobQ"/>
    <property type="match status" value="1"/>
</dbReference>
<dbReference type="Gene3D" id="3.40.50.880">
    <property type="match status" value="1"/>
</dbReference>
<dbReference type="Gene3D" id="3.40.50.300">
    <property type="entry name" value="P-loop containing nucleotide triphosphate hydrolases"/>
    <property type="match status" value="1"/>
</dbReference>
<dbReference type="HAMAP" id="MF_00028">
    <property type="entry name" value="CobQ"/>
    <property type="match status" value="1"/>
</dbReference>
<dbReference type="InterPro" id="IPR029062">
    <property type="entry name" value="Class_I_gatase-like"/>
</dbReference>
<dbReference type="InterPro" id="IPR002586">
    <property type="entry name" value="CobQ/CobB/MinD/ParA_Nub-bd_dom"/>
</dbReference>
<dbReference type="InterPro" id="IPR033949">
    <property type="entry name" value="CobQ_GATase1"/>
</dbReference>
<dbReference type="InterPro" id="IPR047045">
    <property type="entry name" value="CobQ_N"/>
</dbReference>
<dbReference type="InterPro" id="IPR004459">
    <property type="entry name" value="CobQ_synth"/>
</dbReference>
<dbReference type="InterPro" id="IPR011698">
    <property type="entry name" value="GATase_3"/>
</dbReference>
<dbReference type="InterPro" id="IPR027417">
    <property type="entry name" value="P-loop_NTPase"/>
</dbReference>
<dbReference type="NCBIfam" id="TIGR00313">
    <property type="entry name" value="cobQ"/>
    <property type="match status" value="1"/>
</dbReference>
<dbReference type="NCBIfam" id="NF001989">
    <property type="entry name" value="PRK00784.1"/>
    <property type="match status" value="1"/>
</dbReference>
<dbReference type="PANTHER" id="PTHR21343:SF1">
    <property type="entry name" value="COBYRIC ACID SYNTHASE"/>
    <property type="match status" value="1"/>
</dbReference>
<dbReference type="PANTHER" id="PTHR21343">
    <property type="entry name" value="DETHIOBIOTIN SYNTHETASE"/>
    <property type="match status" value="1"/>
</dbReference>
<dbReference type="Pfam" id="PF01656">
    <property type="entry name" value="CbiA"/>
    <property type="match status" value="1"/>
</dbReference>
<dbReference type="Pfam" id="PF07685">
    <property type="entry name" value="GATase_3"/>
    <property type="match status" value="1"/>
</dbReference>
<dbReference type="SUPFAM" id="SSF52317">
    <property type="entry name" value="Class I glutamine amidotransferase-like"/>
    <property type="match status" value="1"/>
</dbReference>
<dbReference type="SUPFAM" id="SSF52540">
    <property type="entry name" value="P-loop containing nucleoside triphosphate hydrolases"/>
    <property type="match status" value="1"/>
</dbReference>
<dbReference type="PROSITE" id="PS51274">
    <property type="entry name" value="GATASE_COBBQ"/>
    <property type="match status" value="1"/>
</dbReference>
<evidence type="ECO:0000255" key="1">
    <source>
        <dbReference type="HAMAP-Rule" id="MF_00028"/>
    </source>
</evidence>
<organism>
    <name type="scientific">Desulforudis audaxviator (strain MP104C)</name>
    <dbReference type="NCBI Taxonomy" id="477974"/>
    <lineage>
        <taxon>Bacteria</taxon>
        <taxon>Bacillati</taxon>
        <taxon>Bacillota</taxon>
        <taxon>Clostridia</taxon>
        <taxon>Thermoanaerobacterales</taxon>
        <taxon>Candidatus Desulforudaceae</taxon>
        <taxon>Candidatus Desulforudis</taxon>
    </lineage>
</organism>
<proteinExistence type="inferred from homology"/>
<sequence>MTARVLMVQGTSSSAGKSLIVAGLCRLYARRGFRVAPFKSQNMALNSYATPDGREIGRAQALQAEAAGVPPHVDMNPILLKPTGEAGSQVVLLGRPLGVYKPANYYALKEKLWPLAAAALDRLRADADLVFAEGAGSPAEINLRPHDIANMEVALYAGASVLLVGDIERGGVFASLLGTMELLAERERELVAGFVVNKFRGDEELLRPGLALIGARTGRPVLGVLPYLHDLHLDEEDSVGLSGRGKAPAPGDLAVAVIRLPRISNYTDFLPLETENGVALCYVDRPQELDGAHAVILPGSKETLADLAWLRRRGLDRALRDFAARGKPLLGICGGFQMLGRTIREGGQTVAGLGLLPVRTRFASEKRTVQVRGVTAEGVWGIPGGLSVRGYEIHRGFSEVCGGRPCFLLGGQGTGLAPEGCAAEEGYVAGTYLHGCFDSDTYRTQWIAAVRRLAGLPARPSEQPGFAARRQRDLDRIADLLAERIGVERLDGILGL</sequence>
<gene>
    <name evidence="1" type="primary">cobQ</name>
    <name type="ordered locus">Daud_1848</name>
</gene>
<comment type="function">
    <text evidence="1">Catalyzes amidations at positions B, D, E, and G on adenosylcobyrinic A,C-diamide. NH(2) groups are provided by glutamine, and one molecule of ATP is hydrogenolyzed for each amidation.</text>
</comment>
<comment type="pathway">
    <text evidence="1">Cofactor biosynthesis; adenosylcobalamin biosynthesis.</text>
</comment>
<comment type="similarity">
    <text evidence="1">Belongs to the CobB/CobQ family. CobQ subfamily.</text>
</comment>
<accession>B1I5R2</accession>